<sequence length="274" mass="29547">MLSVAARSGPFAPVLSATSRGVAGALRPLVQAAVPATSESPVLDLKRSVLCRESLRGQAAGRPLVASVSLNVPASVRYSHTDIKVPDFSDYRRPEVLDSTKSSKESSEARKGFSYLVTATTTVGVAYAAKNVVSQFVSSMSASADVLAMSKIEIKLSDIPEGKNMAFKWRGKPLFVRHRTKKEIDQEAAVEVSQLRDPQHDLERVKKPEWVILIGVCTHLGCVPIANAGDFGGYYCPCHGSHYDASGRIRKGPAPLNLEVPSYEFTSDDMVIVG</sequence>
<organism>
    <name type="scientific">Bos taurus</name>
    <name type="common">Bovine</name>
    <dbReference type="NCBI Taxonomy" id="9913"/>
    <lineage>
        <taxon>Eukaryota</taxon>
        <taxon>Metazoa</taxon>
        <taxon>Chordata</taxon>
        <taxon>Craniata</taxon>
        <taxon>Vertebrata</taxon>
        <taxon>Euteleostomi</taxon>
        <taxon>Mammalia</taxon>
        <taxon>Eutheria</taxon>
        <taxon>Laurasiatheria</taxon>
        <taxon>Artiodactyla</taxon>
        <taxon>Ruminantia</taxon>
        <taxon>Pecora</taxon>
        <taxon>Bovidae</taxon>
        <taxon>Bovinae</taxon>
        <taxon>Bos</taxon>
    </lineage>
</organism>
<evidence type="ECO:0000250" key="1">
    <source>
        <dbReference type="UniProtKB" id="P08067"/>
    </source>
</evidence>
<evidence type="ECO:0000250" key="2">
    <source>
        <dbReference type="UniProtKB" id="P47985"/>
    </source>
</evidence>
<evidence type="ECO:0000250" key="3">
    <source>
        <dbReference type="UniProtKB" id="Q5ZLR5"/>
    </source>
</evidence>
<evidence type="ECO:0000250" key="4">
    <source>
        <dbReference type="UniProtKB" id="Q9CR68"/>
    </source>
</evidence>
<evidence type="ECO:0000255" key="5">
    <source>
        <dbReference type="PROSITE-ProRule" id="PRU00628"/>
    </source>
</evidence>
<evidence type="ECO:0000269" key="6">
    <source>
    </source>
</evidence>
<evidence type="ECO:0000269" key="7">
    <source>
    </source>
</evidence>
<evidence type="ECO:0000269" key="8">
    <source>
    </source>
</evidence>
<evidence type="ECO:0000269" key="9">
    <source>
    </source>
</evidence>
<evidence type="ECO:0000269" key="10">
    <source>
    </source>
</evidence>
<evidence type="ECO:0000269" key="11">
    <source>
    </source>
</evidence>
<evidence type="ECO:0000303" key="12">
    <source>
    </source>
</evidence>
<evidence type="ECO:0000305" key="13"/>
<evidence type="ECO:0007744" key="14">
    <source>
        <dbReference type="PDB" id="1BE3"/>
    </source>
</evidence>
<evidence type="ECO:0007744" key="15">
    <source>
        <dbReference type="PDB" id="1BGY"/>
    </source>
</evidence>
<evidence type="ECO:0007829" key="16">
    <source>
        <dbReference type="PDB" id="1BE3"/>
    </source>
</evidence>
<evidence type="ECO:0007829" key="17">
    <source>
        <dbReference type="PDB" id="1L0L"/>
    </source>
</evidence>
<evidence type="ECO:0007829" key="18">
    <source>
        <dbReference type="PDB" id="1NTM"/>
    </source>
</evidence>
<evidence type="ECO:0007829" key="19">
    <source>
        <dbReference type="PDB" id="1PP9"/>
    </source>
</evidence>
<evidence type="ECO:0007829" key="20">
    <source>
        <dbReference type="PDB" id="1RIE"/>
    </source>
</evidence>
<evidence type="ECO:0007829" key="21">
    <source>
        <dbReference type="PDB" id="1SQP"/>
    </source>
</evidence>
<evidence type="ECO:0007829" key="22">
    <source>
        <dbReference type="PDB" id="2A06"/>
    </source>
</evidence>
<evidence type="ECO:0007829" key="23">
    <source>
        <dbReference type="PDB" id="2FYU"/>
    </source>
</evidence>
<evidence type="ECO:0007829" key="24">
    <source>
        <dbReference type="PDB" id="5NMI"/>
    </source>
</evidence>
<protein>
    <recommendedName>
        <fullName>Cytochrome b-c1 complex subunit Rieske, mitochondrial</fullName>
        <ecNumber>7.1.1.8</ecNumber>
    </recommendedName>
    <alternativeName>
        <fullName>Complex III subunit 5</fullName>
    </alternativeName>
    <alternativeName>
        <fullName>Cytochrome b-c1 complex subunit 5</fullName>
    </alternativeName>
    <alternativeName>
        <fullName>Rieske iron-sulfur protein</fullName>
        <shortName>RISP</shortName>
    </alternativeName>
    <alternativeName>
        <fullName>Rieske protein UQCRFS1</fullName>
    </alternativeName>
    <alternativeName>
        <fullName>Ubiquinol-cytochrome c reductase iron-sulfur subunit</fullName>
    </alternativeName>
    <component>
        <recommendedName>
            <fullName evidence="12">Cytochrome b-c1 complex subunit 9</fullName>
            <shortName evidence="12">Su9</shortName>
            <shortName evidence="12">Subunit 9</shortName>
        </recommendedName>
        <alternativeName>
            <fullName evidence="12">8 kDa subunit 9</fullName>
        </alternativeName>
        <alternativeName>
            <fullName>Complex III subunit IX</fullName>
        </alternativeName>
        <alternativeName>
            <fullName>Cytochrome b-c1 complex subunit 11</fullName>
        </alternativeName>
        <alternativeName>
            <fullName>UQCRFS1 mitochondrial targeting sequence</fullName>
            <shortName>UQCRFS1 MTS</shortName>
        </alternativeName>
        <alternativeName>
            <fullName evidence="12">Ubiquinol-cytochrome c reductase 8 kDa protein</fullName>
        </alternativeName>
    </component>
</protein>
<proteinExistence type="evidence at protein level"/>
<keyword id="KW-0001">2Fe-2S</keyword>
<keyword id="KW-0002">3D-structure</keyword>
<keyword id="KW-0903">Direct protein sequencing</keyword>
<keyword id="KW-1015">Disulfide bond</keyword>
<keyword id="KW-0249">Electron transport</keyword>
<keyword id="KW-0408">Iron</keyword>
<keyword id="KW-0411">Iron-sulfur</keyword>
<keyword id="KW-0472">Membrane</keyword>
<keyword id="KW-0479">Metal-binding</keyword>
<keyword id="KW-0496">Mitochondrion</keyword>
<keyword id="KW-0999">Mitochondrion inner membrane</keyword>
<keyword id="KW-1185">Reference proteome</keyword>
<keyword id="KW-0679">Respiratory chain</keyword>
<keyword id="KW-0809">Transit peptide</keyword>
<keyword id="KW-1278">Translocase</keyword>
<keyword id="KW-0812">Transmembrane</keyword>
<keyword id="KW-1133">Transmembrane helix</keyword>
<keyword id="KW-0813">Transport</keyword>
<reference key="1">
    <citation type="journal article" date="1990" name="Biochem. Biophys. Res. Commun.">
        <title>Cloning and sequencing of a cDNA encoding the Rieske iron-sulfur protein of bovine heart mitochondrial ubiquinol-cytochrome c reductase.</title>
        <authorList>
            <person name="Usui S."/>
            <person name="Yu L."/>
            <person name="Yu C.-A."/>
        </authorList>
    </citation>
    <scope>NUCLEOTIDE SEQUENCE [MRNA]</scope>
    <source>
        <tissue>Heart</tissue>
    </source>
</reference>
<reference key="2">
    <citation type="journal article" date="1993" name="J. Biol. Chem.">
        <title>The mitochondrial targeting presequence of the Rieske iron-sulfur protein is processed in a single step after insertion into the cytochrome bc1 complex in mammals and retained as a subunit in the complex.</title>
        <authorList>
            <person name="Brandt U."/>
            <person name="Yu L."/>
            <person name="Yu C.-A."/>
            <person name="Trumpower B.L."/>
        </authorList>
    </citation>
    <scope>NUCLEOTIDE SEQUENCE [MRNA]</scope>
    <scope>SEQUENCE REVISION</scope>
    <scope>SUBUNIT</scope>
    <scope>FUNCTION</scope>
    <source>
        <tissue>Heart</tissue>
    </source>
</reference>
<reference key="3">
    <citation type="submission" date="2006-05" db="EMBL/GenBank/DDBJ databases">
        <authorList>
            <consortium name="NIH - Mammalian Gene Collection (MGC) project"/>
        </authorList>
    </citation>
    <scope>NUCLEOTIDE SEQUENCE [LARGE SCALE MRNA]</scope>
    <source>
        <strain>Crossbred X Angus</strain>
        <strain>Hereford</strain>
        <tissue>Fetal brain</tissue>
        <tissue>Fetal cerebellum</tissue>
        <tissue>Liver</tissue>
    </source>
</reference>
<reference key="4">
    <citation type="journal article" date="1985" name="FEBS Lett.">
        <title>Isolation and amino acid sequence of the 8 kDa DCCD-binding protein of beef heart ubiquinol:cytochrome c reductase.</title>
        <authorList>
            <person name="Borchart U."/>
            <person name="Machleidt W."/>
            <person name="Schagger H."/>
            <person name="Link T.A."/>
            <person name="von Jagow G."/>
        </authorList>
    </citation>
    <scope>PROTEIN SEQUENCE OF 1-78</scope>
    <scope>FUNCTION</scope>
    <source>
        <tissue>Heart</tissue>
    </source>
</reference>
<reference key="5">
    <citation type="journal article" date="1987" name="FEBS Lett.">
        <title>Isolation and amino acid sequence of the 'Rieske' iron sulfur protein of beef heart ubiquinol:cytochrome c reductase.</title>
        <authorList>
            <person name="Schaegger H."/>
            <person name="Borchart U."/>
            <person name="Machleidt W."/>
            <person name="Link T.A."/>
            <person name="von Jagow G."/>
        </authorList>
    </citation>
    <scope>PROTEIN SEQUENCE OF 79-274</scope>
</reference>
<reference key="6">
    <citation type="journal article" date="2001" name="J. Biol. Chem.">
        <title>Reconstitution of mitochondrial processing peptidase from the core proteins (subunits I and II) of bovine heart mitochondrial cytochrome bc(1) complex.</title>
        <authorList>
            <person name="Deng K."/>
            <person name="Shenoy S.K."/>
            <person name="Tso S.C."/>
            <person name="Yu L."/>
            <person name="Yu C.A."/>
        </authorList>
    </citation>
    <scope>SUBUNIT</scope>
</reference>
<reference key="7">
    <citation type="journal article" date="1996" name="Structure">
        <title>Structure of a water soluble fragment of the 'Rieske' iron-sulfur protein of the bovine heart mitochondrial cytochrome bc1 complex determined by MAD phasing at 1.5-A resolution.</title>
        <authorList>
            <person name="Iwata S."/>
            <person name="Saynovits M."/>
            <person name="Link T.A."/>
            <person name="Michel H."/>
        </authorList>
    </citation>
    <scope>X-RAY CRYSTALLOGRAPHY (1.5 ANGSTROMS) OF 148-274</scope>
</reference>
<reference key="8">
    <citation type="journal article" date="1997" name="Science">
        <title>Crystal structure of the cytochrome bc1 complex from bovine heart mitochondria.</title>
        <authorList>
            <person name="Xia D."/>
            <person name="Yu C.A."/>
            <person name="Kim H."/>
            <person name="Xia J.Z."/>
            <person name="Kachurin A.M."/>
            <person name="Zhang L."/>
            <person name="Yu L."/>
            <person name="Deisenhofer J."/>
        </authorList>
    </citation>
    <scope>X-RAY CRYSTALLOGRAPHY (2.7 ANGSTROMS)</scope>
</reference>
<reference key="9">
    <citation type="journal article" date="1997" name="Science">
        <authorList>
            <person name="Xia D."/>
            <person name="Yu C.A."/>
            <person name="Kim H."/>
            <person name="Xia J.Z."/>
            <person name="Kachurin A.M."/>
            <person name="Zhang L."/>
            <person name="Yu L."/>
            <person name="Deisenhofer J."/>
        </authorList>
    </citation>
    <scope>ERRATUM OF PUBMED:9204897</scope>
</reference>
<reference key="10">
    <citation type="journal article" date="1998" name="Science">
        <title>Complete structure of the 11-subunit bovine mitochondrial cytochrome bc1 complex.</title>
        <authorList>
            <person name="Iwata S."/>
            <person name="Lee J.W."/>
            <person name="Okada K."/>
            <person name="Lee J.K."/>
            <person name="Iwata M."/>
            <person name="Rasmussen B."/>
            <person name="Link T.A."/>
            <person name="Ramaswamy S."/>
            <person name="Jap B.K."/>
        </authorList>
    </citation>
    <scope>X-RAY CRYSTALLOGRAPHY (3.0 ANGSTROMS)</scope>
</reference>
<reference key="11">
    <citation type="journal article" date="2002" name="Biochemistry">
        <title>The crystal structure of mitochondrial cytochrome bc1 in complex with famoxadone: the role of aromatic-aromatic interaction in inhibition.</title>
        <authorList>
            <person name="Gao X."/>
            <person name="Wen X."/>
            <person name="Yu C."/>
            <person name="Esser L."/>
            <person name="Tsao S."/>
            <person name="Quinn B."/>
            <person name="Zhang L."/>
            <person name="Yu L."/>
            <person name="Xia D."/>
        </authorList>
    </citation>
    <scope>X-RAY CRYSTALLOGRAPHY (2.35 ANGSTROMS)</scope>
</reference>
<reference key="12">
    <citation type="journal article" date="2004" name="J. Mol. Biol.">
        <title>Crystallographic studies of quinol oxidation site inhibitors: a modified classification of inhibitors for the cytochrome bc(1) complex.</title>
        <authorList>
            <person name="Esser L."/>
            <person name="Quinn B."/>
            <person name="Li Y.F."/>
            <person name="Zhang M."/>
            <person name="Elberry M."/>
            <person name="Yu L."/>
            <person name="Yu C.A."/>
            <person name="Xia D."/>
        </authorList>
    </citation>
    <scope>X-RAY CRYSTALLOGRAPHY (2.69 ANGSTROMS)</scope>
</reference>
<reference key="13">
    <citation type="journal article" date="2005" name="J. Mol. Biol.">
        <title>Binding of the respiratory chain inhibitor antimycin to the mitochondrial bc1 complex: a new crystal structure reveals an altered intramolecular hydrogen-bonding pattern.</title>
        <authorList>
            <person name="Huang L.S."/>
            <person name="Cobessi D."/>
            <person name="Tung E.Y."/>
            <person name="Berry E.A."/>
        </authorList>
    </citation>
    <scope>X-RAY CRYSTALLOGRAPHY (2.1 ANGSTROMS)</scope>
</reference>
<reference key="14">
    <citation type="journal article" date="2006" name="Proc. Natl. Acad. Sci. U.S.A.">
        <title>Surface-modulated motion switch: capture and release of iron-sulfur protein in the cytochrome bc1 complex.</title>
        <authorList>
            <person name="Esser L."/>
            <person name="Gong X."/>
            <person name="Yang S."/>
            <person name="Yu L."/>
            <person name="Yu C.A."/>
            <person name="Xia D."/>
        </authorList>
    </citation>
    <scope>X-RAY CRYSTALLOGRAPHY (2.26 ANGSTROMS)</scope>
</reference>
<reference key="15">
    <citation type="journal article" date="2016" name="Elife">
        <title>Functional asymmetry and electron flow in the bovine respirasome.</title>
        <authorList>
            <person name="Sousa J.S."/>
            <person name="Mills D.J."/>
            <person name="Vonck J."/>
            <person name="Kuehlbrandt W."/>
        </authorList>
    </citation>
    <scope>STRUCTURE BY ELECTRON MICROSCOPY (9.10 ANGSTROMS)</scope>
    <scope>SUBUNIT</scope>
</reference>
<gene>
    <name type="primary">UQCRFS1</name>
</gene>
<accession>P13272</accession>
<accession>A3KN53</accession>
<accession>P07588</accession>
<accession>Q1LZH6</accession>
<name>UCRI_BOVIN</name>
<dbReference type="EC" id="7.1.1.8"/>
<dbReference type="EMBL" id="M34336">
    <property type="protein sequence ID" value="AAA30515.1"/>
    <property type="status" value="ALT_SEQ"/>
    <property type="molecule type" value="mRNA"/>
</dbReference>
<dbReference type="EMBL" id="S58789">
    <property type="protein sequence ID" value="AAB26197.1"/>
    <property type="molecule type" value="mRNA"/>
</dbReference>
<dbReference type="EMBL" id="BC115994">
    <property type="protein sequence ID" value="AAI15995.1"/>
    <property type="molecule type" value="mRNA"/>
</dbReference>
<dbReference type="EMBL" id="BC133620">
    <property type="protein sequence ID" value="AAI33621.1"/>
    <property type="molecule type" value="mRNA"/>
</dbReference>
<dbReference type="EMBL" id="BC133632">
    <property type="protein sequence ID" value="AAI33633.1"/>
    <property type="molecule type" value="mRNA"/>
</dbReference>
<dbReference type="PIR" id="A46063">
    <property type="entry name" value="A34660"/>
</dbReference>
<dbReference type="RefSeq" id="NP_777238.2">
    <property type="nucleotide sequence ID" value="NM_174813.3"/>
</dbReference>
<dbReference type="PDB" id="1BCC">
    <property type="method" value="X-ray"/>
    <property type="resolution" value="3.16 A"/>
    <property type="chains" value="A=192-195, E=79-274"/>
</dbReference>
<dbReference type="PDB" id="1BE3">
    <property type="method" value="X-ray"/>
    <property type="resolution" value="3.00 A"/>
    <property type="chains" value="E=79-274, I=1-78"/>
</dbReference>
<dbReference type="PDB" id="1BGY">
    <property type="method" value="X-ray"/>
    <property type="resolution" value="3.00 A"/>
    <property type="chains" value="E/Q=79-274, I/U=1-78"/>
</dbReference>
<dbReference type="PDB" id="1L0L">
    <property type="method" value="X-ray"/>
    <property type="resolution" value="2.35 A"/>
    <property type="chains" value="E=79-274, I=1-78"/>
</dbReference>
<dbReference type="PDB" id="1L0N">
    <property type="method" value="X-ray"/>
    <property type="resolution" value="2.60 A"/>
    <property type="chains" value="E=79-274, I=1-78"/>
</dbReference>
<dbReference type="PDB" id="1NTK">
    <property type="method" value="X-ray"/>
    <property type="resolution" value="2.60 A"/>
    <property type="chains" value="E=79-274, I=1-57"/>
</dbReference>
<dbReference type="PDB" id="1NTM">
    <property type="method" value="X-ray"/>
    <property type="resolution" value="2.40 A"/>
    <property type="chains" value="E=79-274, I=1-57"/>
</dbReference>
<dbReference type="PDB" id="1NTZ">
    <property type="method" value="X-ray"/>
    <property type="resolution" value="2.60 A"/>
    <property type="chains" value="E=79-274, I=1-57"/>
</dbReference>
<dbReference type="PDB" id="1NU1">
    <property type="method" value="X-ray"/>
    <property type="resolution" value="3.20 A"/>
    <property type="chains" value="E=79-274, I=1-57"/>
</dbReference>
<dbReference type="PDB" id="1PP9">
    <property type="method" value="X-ray"/>
    <property type="resolution" value="2.10 A"/>
    <property type="chains" value="E/R=79-274, I/V=1-78"/>
</dbReference>
<dbReference type="PDB" id="1PPJ">
    <property type="method" value="X-ray"/>
    <property type="resolution" value="2.10 A"/>
    <property type="chains" value="E/R=79-274, I/V=1-78"/>
</dbReference>
<dbReference type="PDB" id="1QCR">
    <property type="method" value="X-ray"/>
    <property type="resolution" value="2.70 A"/>
    <property type="chains" value="E=79-274, I=21-48"/>
</dbReference>
<dbReference type="PDB" id="1RIE">
    <property type="method" value="X-ray"/>
    <property type="resolution" value="1.50 A"/>
    <property type="chains" value="A=146-274"/>
</dbReference>
<dbReference type="PDB" id="1SQB">
    <property type="method" value="X-ray"/>
    <property type="resolution" value="2.69 A"/>
    <property type="chains" value="E=79-274, I=1-78"/>
</dbReference>
<dbReference type="PDB" id="1SQP">
    <property type="method" value="X-ray"/>
    <property type="resolution" value="2.70 A"/>
    <property type="chains" value="E=79-274, I=1-78"/>
</dbReference>
<dbReference type="PDB" id="1SQQ">
    <property type="method" value="X-ray"/>
    <property type="resolution" value="3.00 A"/>
    <property type="chains" value="E=79-274, I=1-78"/>
</dbReference>
<dbReference type="PDB" id="1SQV">
    <property type="method" value="X-ray"/>
    <property type="resolution" value="2.85 A"/>
    <property type="chains" value="E=79-274, I=1-78"/>
</dbReference>
<dbReference type="PDB" id="1SQX">
    <property type="method" value="X-ray"/>
    <property type="resolution" value="2.60 A"/>
    <property type="chains" value="E=79-274, I=1-78"/>
</dbReference>
<dbReference type="PDB" id="2A06">
    <property type="method" value="X-ray"/>
    <property type="resolution" value="2.10 A"/>
    <property type="chains" value="E/R=79-274, I/V=1-78"/>
</dbReference>
<dbReference type="PDB" id="2FYU">
    <property type="method" value="X-ray"/>
    <property type="resolution" value="2.26 A"/>
    <property type="chains" value="E=79-274, I=1-78"/>
</dbReference>
<dbReference type="PDB" id="2YBB">
    <property type="method" value="EM"/>
    <property type="resolution" value="19.00 A"/>
    <property type="chains" value="E/e=79-274, I/i=14-78"/>
</dbReference>
<dbReference type="PDB" id="4D6T">
    <property type="method" value="X-ray"/>
    <property type="resolution" value="3.57 A"/>
    <property type="chains" value="E/I/R/V=1-274"/>
</dbReference>
<dbReference type="PDB" id="4D6U">
    <property type="method" value="X-ray"/>
    <property type="resolution" value="4.09 A"/>
    <property type="chains" value="E/I/R/V=1-274"/>
</dbReference>
<dbReference type="PDB" id="5GPN">
    <property type="method" value="EM"/>
    <property type="resolution" value="5.40 A"/>
    <property type="chains" value="I/U=1-78"/>
</dbReference>
<dbReference type="PDB" id="5KLV">
    <property type="method" value="X-ray"/>
    <property type="resolution" value="2.65 A"/>
    <property type="chains" value="E=79-274, I=1-78"/>
</dbReference>
<dbReference type="PDB" id="5LUF">
    <property type="method" value="EM"/>
    <property type="resolution" value="9.10 A"/>
    <property type="chains" value="e/q=79-274, i/u=1-78"/>
</dbReference>
<dbReference type="PDB" id="5NMI">
    <property type="method" value="X-ray"/>
    <property type="resolution" value="3.50 A"/>
    <property type="chains" value="E/I/R/V=1-274"/>
</dbReference>
<dbReference type="PDB" id="6FO0">
    <property type="method" value="EM"/>
    <property type="resolution" value="4.10 A"/>
    <property type="chains" value="E/R=1-274"/>
</dbReference>
<dbReference type="PDB" id="6FO6">
    <property type="method" value="EM"/>
    <property type="resolution" value="4.10 A"/>
    <property type="chains" value="E/R=1-274"/>
</dbReference>
<dbReference type="PDB" id="8P65">
    <property type="method" value="EM"/>
    <property type="resolution" value="3.00 A"/>
    <property type="chains" value="E/R=79-274, I/V=1-54"/>
</dbReference>
<dbReference type="PDB" id="9GCX">
    <property type="method" value="X-ray"/>
    <property type="resolution" value="3.52 A"/>
    <property type="chains" value="E/I=1-274"/>
</dbReference>
<dbReference type="PDBsum" id="1BCC"/>
<dbReference type="PDBsum" id="1BE3"/>
<dbReference type="PDBsum" id="1BGY"/>
<dbReference type="PDBsum" id="1L0L"/>
<dbReference type="PDBsum" id="1L0N"/>
<dbReference type="PDBsum" id="1NTK"/>
<dbReference type="PDBsum" id="1NTM"/>
<dbReference type="PDBsum" id="1NTZ"/>
<dbReference type="PDBsum" id="1NU1"/>
<dbReference type="PDBsum" id="1PP9"/>
<dbReference type="PDBsum" id="1PPJ"/>
<dbReference type="PDBsum" id="1QCR"/>
<dbReference type="PDBsum" id="1RIE"/>
<dbReference type="PDBsum" id="1SQB"/>
<dbReference type="PDBsum" id="1SQP"/>
<dbReference type="PDBsum" id="1SQQ"/>
<dbReference type="PDBsum" id="1SQV"/>
<dbReference type="PDBsum" id="1SQX"/>
<dbReference type="PDBsum" id="2A06"/>
<dbReference type="PDBsum" id="2FYU"/>
<dbReference type="PDBsum" id="2YBB"/>
<dbReference type="PDBsum" id="4D6T"/>
<dbReference type="PDBsum" id="4D6U"/>
<dbReference type="PDBsum" id="5GPN"/>
<dbReference type="PDBsum" id="5KLV"/>
<dbReference type="PDBsum" id="5LUF"/>
<dbReference type="PDBsum" id="5NMI"/>
<dbReference type="PDBsum" id="6FO0"/>
<dbReference type="PDBsum" id="6FO6"/>
<dbReference type="PDBsum" id="8P65"/>
<dbReference type="PDBsum" id="9GCX"/>
<dbReference type="EMDB" id="EMD-17461"/>
<dbReference type="EMDB" id="EMD-26203"/>
<dbReference type="EMDB" id="EMD-30673"/>
<dbReference type="EMDB" id="EMD-4107"/>
<dbReference type="EMDB" id="EMD-41609"/>
<dbReference type="EMDB" id="EMD-4286"/>
<dbReference type="EMDB" id="EMD-4288"/>
<dbReference type="EMDB" id="EMD-4292"/>
<dbReference type="EMDB" id="EMD-9534"/>
<dbReference type="SMR" id="P13272"/>
<dbReference type="CORUM" id="P13272"/>
<dbReference type="DIP" id="DIP-38974N"/>
<dbReference type="FunCoup" id="P13272">
    <property type="interactions" value="2350"/>
</dbReference>
<dbReference type="IntAct" id="P13272">
    <property type="interactions" value="3"/>
</dbReference>
<dbReference type="STRING" id="9913.ENSBTAP00000054196"/>
<dbReference type="TCDB" id="3.D.3.2.1">
    <property type="family name" value="the proton-translocating quinol:cytochrome c reductase (qcr) superfamily"/>
</dbReference>
<dbReference type="PaxDb" id="9913-ENSBTAP00000054196"/>
<dbReference type="PeptideAtlas" id="P13272"/>
<dbReference type="GeneID" id="287020"/>
<dbReference type="KEGG" id="bta:287020"/>
<dbReference type="CTD" id="7386"/>
<dbReference type="VEuPathDB" id="HostDB:ENSBTAG00000046786"/>
<dbReference type="eggNOG" id="KOG1671">
    <property type="taxonomic scope" value="Eukaryota"/>
</dbReference>
<dbReference type="InParanoid" id="P13272"/>
<dbReference type="OMA" id="PPYDFND"/>
<dbReference type="OrthoDB" id="1637982at2759"/>
<dbReference type="Reactome" id="R-BTA-611105">
    <property type="pathway name" value="Respiratory electron transport"/>
</dbReference>
<dbReference type="Reactome" id="R-BTA-9865881">
    <property type="pathway name" value="Complex III assembly"/>
</dbReference>
<dbReference type="EvolutionaryTrace" id="P13272"/>
<dbReference type="Proteomes" id="UP000009136">
    <property type="component" value="Chromosome 18"/>
</dbReference>
<dbReference type="Bgee" id="ENSBTAG00000046786">
    <property type="expression patterns" value="Expressed in cardiac ventricle and 103 other cell types or tissues"/>
</dbReference>
<dbReference type="GO" id="GO:0005743">
    <property type="term" value="C:mitochondrial inner membrane"/>
    <property type="evidence" value="ECO:0000250"/>
    <property type="project" value="AgBase"/>
</dbReference>
<dbReference type="GO" id="GO:0005739">
    <property type="term" value="C:mitochondrion"/>
    <property type="evidence" value="ECO:0000250"/>
    <property type="project" value="AgBase"/>
</dbReference>
<dbReference type="GO" id="GO:0045275">
    <property type="term" value="C:respiratory chain complex III"/>
    <property type="evidence" value="ECO:0000318"/>
    <property type="project" value="GO_Central"/>
</dbReference>
<dbReference type="GO" id="GO:0051537">
    <property type="term" value="F:2 iron, 2 sulfur cluster binding"/>
    <property type="evidence" value="ECO:0007669"/>
    <property type="project" value="UniProtKB-KW"/>
</dbReference>
<dbReference type="GO" id="GO:0046872">
    <property type="term" value="F:metal ion binding"/>
    <property type="evidence" value="ECO:0007669"/>
    <property type="project" value="UniProtKB-KW"/>
</dbReference>
<dbReference type="GO" id="GO:0016491">
    <property type="term" value="F:oxidoreductase activity"/>
    <property type="evidence" value="ECO:0000318"/>
    <property type="project" value="GO_Central"/>
</dbReference>
<dbReference type="GO" id="GO:0008121">
    <property type="term" value="F:ubiquinol-cytochrome-c reductase activity"/>
    <property type="evidence" value="ECO:0007669"/>
    <property type="project" value="UniProtKB-EC"/>
</dbReference>
<dbReference type="GO" id="GO:0006122">
    <property type="term" value="P:mitochondrial electron transport, ubiquinol to cytochrome c"/>
    <property type="evidence" value="ECO:0000318"/>
    <property type="project" value="GO_Central"/>
</dbReference>
<dbReference type="CDD" id="cd03470">
    <property type="entry name" value="Rieske_cytochrome_bc1"/>
    <property type="match status" value="1"/>
</dbReference>
<dbReference type="FunFam" id="1.20.5.270:FF:000001">
    <property type="entry name" value="Cytochrome b-c1 complex subunit Rieske, mitochondrial"/>
    <property type="match status" value="1"/>
</dbReference>
<dbReference type="FunFam" id="2.10.210.10:FF:000001">
    <property type="entry name" value="Cytochrome b-c1 complex subunit Rieske, mitochondrial"/>
    <property type="match status" value="1"/>
</dbReference>
<dbReference type="FunFam" id="2.102.10.10:FF:000001">
    <property type="entry name" value="Cytochrome b-c1 complex subunit Rieske, mitochondrial"/>
    <property type="match status" value="1"/>
</dbReference>
<dbReference type="Gene3D" id="2.10.210.10">
    <property type="entry name" value="Cytochrome Bc1 Complex, Chain I"/>
    <property type="match status" value="1"/>
</dbReference>
<dbReference type="Gene3D" id="2.102.10.10">
    <property type="entry name" value="Rieske [2Fe-2S] iron-sulphur domain"/>
    <property type="match status" value="1"/>
</dbReference>
<dbReference type="Gene3D" id="1.20.5.270">
    <property type="entry name" value="Ubiquinol cytochrome reductase, transmembrane domain"/>
    <property type="match status" value="1"/>
</dbReference>
<dbReference type="InterPro" id="IPR037008">
    <property type="entry name" value="bc1_Rieske_TM_sf"/>
</dbReference>
<dbReference type="InterPro" id="IPR011070">
    <property type="entry name" value="Globular_prot_asu/bsu"/>
</dbReference>
<dbReference type="InterPro" id="IPR017941">
    <property type="entry name" value="Rieske_2Fe-2S"/>
</dbReference>
<dbReference type="InterPro" id="IPR036922">
    <property type="entry name" value="Rieske_2Fe-2S_sf"/>
</dbReference>
<dbReference type="InterPro" id="IPR014349">
    <property type="entry name" value="Rieske_Fe-S_prot"/>
</dbReference>
<dbReference type="InterPro" id="IPR005805">
    <property type="entry name" value="Rieske_Fe-S_prot_C"/>
</dbReference>
<dbReference type="InterPro" id="IPR004192">
    <property type="entry name" value="Rieske_TM"/>
</dbReference>
<dbReference type="InterPro" id="IPR006317">
    <property type="entry name" value="Ubiquinol_cyt_c_Rdtase_Fe-S-su"/>
</dbReference>
<dbReference type="InterPro" id="IPR015248">
    <property type="entry name" value="UQCRFS1_N"/>
</dbReference>
<dbReference type="NCBIfam" id="TIGR01416">
    <property type="entry name" value="Rieske_proteo"/>
    <property type="match status" value="1"/>
</dbReference>
<dbReference type="PANTHER" id="PTHR10134">
    <property type="entry name" value="CYTOCHROME B-C1 COMPLEX SUBUNIT RIESKE, MITOCHONDRIAL"/>
    <property type="match status" value="1"/>
</dbReference>
<dbReference type="Pfam" id="PF00355">
    <property type="entry name" value="Rieske"/>
    <property type="match status" value="1"/>
</dbReference>
<dbReference type="Pfam" id="PF09165">
    <property type="entry name" value="Ubiq-Cytc-red_N"/>
    <property type="match status" value="1"/>
</dbReference>
<dbReference type="Pfam" id="PF02921">
    <property type="entry name" value="UCR_TM"/>
    <property type="match status" value="1"/>
</dbReference>
<dbReference type="PRINTS" id="PR00162">
    <property type="entry name" value="RIESKE"/>
</dbReference>
<dbReference type="SUPFAM" id="SSF50022">
    <property type="entry name" value="ISP domain"/>
    <property type="match status" value="1"/>
</dbReference>
<dbReference type="SUPFAM" id="SSF81502">
    <property type="entry name" value="ISP transmembrane anchor"/>
    <property type="match status" value="1"/>
</dbReference>
<dbReference type="SUPFAM" id="SSF56568">
    <property type="entry name" value="Non-globular alpha+beta subunits of globular proteins"/>
    <property type="match status" value="1"/>
</dbReference>
<dbReference type="PROSITE" id="PS51296">
    <property type="entry name" value="RIESKE"/>
    <property type="match status" value="1"/>
</dbReference>
<feature type="chain" id="PRO_0000030659" description="Cytochrome b-c1 complex subunit 9" evidence="8 9">
    <location>
        <begin position="1"/>
        <end position="78"/>
    </location>
</feature>
<feature type="chain" id="PRO_0000030660" description="Cytochrome b-c1 complex subunit Rieske, mitochondrial">
    <location>
        <begin position="79"/>
        <end position="274"/>
    </location>
</feature>
<feature type="topological domain" description="Mitochondrial matrix" evidence="11">
    <location>
        <begin position="79"/>
        <end position="103"/>
    </location>
</feature>
<feature type="transmembrane region" description="Helical" evidence="11">
    <location>
        <begin position="104"/>
        <end position="140"/>
    </location>
</feature>
<feature type="topological domain" description="Mitochondrial intermembrane" evidence="11">
    <location>
        <begin position="141"/>
        <end position="274"/>
    </location>
</feature>
<feature type="domain" description="Rieske" evidence="5">
    <location>
        <begin position="187"/>
        <end position="272"/>
    </location>
</feature>
<feature type="binding site" evidence="11 14 15">
    <location>
        <position position="217"/>
    </location>
    <ligand>
        <name>[2Fe-2S] cluster</name>
        <dbReference type="ChEBI" id="CHEBI:190135"/>
    </ligand>
</feature>
<feature type="binding site" evidence="11 14 15">
    <location>
        <position position="219"/>
    </location>
    <ligand>
        <name>[2Fe-2S] cluster</name>
        <dbReference type="ChEBI" id="CHEBI:190135"/>
    </ligand>
</feature>
<feature type="binding site" evidence="11 14 15">
    <location>
        <position position="236"/>
    </location>
    <ligand>
        <name>[2Fe-2S] cluster</name>
        <dbReference type="ChEBI" id="CHEBI:190135"/>
    </ligand>
</feature>
<feature type="binding site" evidence="11 14 15">
    <location>
        <position position="239"/>
    </location>
    <ligand>
        <name>[2Fe-2S] cluster</name>
        <dbReference type="ChEBI" id="CHEBI:190135"/>
    </ligand>
</feature>
<feature type="binding site" evidence="11 14 15">
    <location>
        <position position="241"/>
    </location>
    <ligand>
        <name>[2Fe-2S] cluster</name>
        <dbReference type="ChEBI" id="CHEBI:190135"/>
    </ligand>
</feature>
<feature type="disulfide bond" evidence="10 11 14 15">
    <location>
        <begin position="222"/>
        <end position="238"/>
    </location>
</feature>
<feature type="sequence conflict" description="In Ref. 5; AA sequence." evidence="13" ref="5">
    <original>S</original>
    <variation>A</variation>
    <location>
        <position position="150"/>
    </location>
</feature>
<feature type="sequence conflict" description="In Ref. 5; AA sequence." evidence="13" ref="5">
    <original>D</original>
    <variation>G</variation>
    <location>
        <position position="269"/>
    </location>
</feature>
<feature type="helix" evidence="23">
    <location>
        <begin position="5"/>
        <end position="7"/>
    </location>
</feature>
<feature type="strand" evidence="23">
    <location>
        <begin position="8"/>
        <end position="10"/>
    </location>
</feature>
<feature type="strand" evidence="23">
    <location>
        <begin position="12"/>
        <end position="19"/>
    </location>
</feature>
<feature type="strand" evidence="23">
    <location>
        <begin position="22"/>
        <end position="24"/>
    </location>
</feature>
<feature type="strand" evidence="18">
    <location>
        <begin position="27"/>
        <end position="29"/>
    </location>
</feature>
<feature type="helix" evidence="23">
    <location>
        <begin position="30"/>
        <end position="33"/>
    </location>
</feature>
<feature type="strand" evidence="23">
    <location>
        <begin position="34"/>
        <end position="36"/>
    </location>
</feature>
<feature type="strand" evidence="23">
    <location>
        <begin position="43"/>
        <end position="45"/>
    </location>
</feature>
<feature type="helix" evidence="19">
    <location>
        <begin position="52"/>
        <end position="55"/>
    </location>
</feature>
<feature type="strand" evidence="24">
    <location>
        <begin position="61"/>
        <end position="63"/>
    </location>
</feature>
<feature type="strand" evidence="19">
    <location>
        <begin position="65"/>
        <end position="72"/>
    </location>
</feature>
<feature type="strand" evidence="19">
    <location>
        <begin position="75"/>
        <end position="77"/>
    </location>
</feature>
<feature type="helix" evidence="19">
    <location>
        <begin position="80"/>
        <end position="82"/>
    </location>
</feature>
<feature type="turn" evidence="19">
    <location>
        <begin position="89"/>
        <end position="91"/>
    </location>
</feature>
<feature type="helix" evidence="19">
    <location>
        <begin position="94"/>
        <end position="96"/>
    </location>
</feature>
<feature type="strand" evidence="17">
    <location>
        <begin position="99"/>
        <end position="101"/>
    </location>
</feature>
<feature type="helix" evidence="19">
    <location>
        <begin position="104"/>
        <end position="140"/>
    </location>
</feature>
<feature type="helix" evidence="19">
    <location>
        <begin position="144"/>
        <end position="147"/>
    </location>
</feature>
<feature type="strand" evidence="20">
    <location>
        <begin position="150"/>
        <end position="155"/>
    </location>
</feature>
<feature type="helix" evidence="20">
    <location>
        <begin position="156"/>
        <end position="158"/>
    </location>
</feature>
<feature type="strand" evidence="24">
    <location>
        <begin position="161"/>
        <end position="163"/>
    </location>
</feature>
<feature type="strand" evidence="20">
    <location>
        <begin position="164"/>
        <end position="169"/>
    </location>
</feature>
<feature type="strand" evidence="20">
    <location>
        <begin position="172"/>
        <end position="178"/>
    </location>
</feature>
<feature type="helix" evidence="20">
    <location>
        <begin position="181"/>
        <end position="188"/>
    </location>
</feature>
<feature type="helix" evidence="20">
    <location>
        <begin position="192"/>
        <end position="194"/>
    </location>
</feature>
<feature type="strand" evidence="22">
    <location>
        <begin position="195"/>
        <end position="197"/>
    </location>
</feature>
<feature type="helix" evidence="20">
    <location>
        <begin position="201"/>
        <end position="203"/>
    </location>
</feature>
<feature type="strand" evidence="17">
    <location>
        <begin position="205"/>
        <end position="207"/>
    </location>
</feature>
<feature type="strand" evidence="20">
    <location>
        <begin position="210"/>
        <end position="214"/>
    </location>
</feature>
<feature type="turn" evidence="20">
    <location>
        <begin position="218"/>
        <end position="220"/>
    </location>
</feature>
<feature type="strand" evidence="21">
    <location>
        <begin position="225"/>
        <end position="227"/>
    </location>
</feature>
<feature type="turn" evidence="20">
    <location>
        <begin position="229"/>
        <end position="231"/>
    </location>
</feature>
<feature type="strand" evidence="20">
    <location>
        <begin position="232"/>
        <end position="236"/>
    </location>
</feature>
<feature type="turn" evidence="20">
    <location>
        <begin position="237"/>
        <end position="240"/>
    </location>
</feature>
<feature type="strand" evidence="20">
    <location>
        <begin position="241"/>
        <end position="244"/>
    </location>
</feature>
<feature type="strand" evidence="16">
    <location>
        <begin position="245"/>
        <end position="247"/>
    </location>
</feature>
<feature type="strand" evidence="20">
    <location>
        <begin position="249"/>
        <end position="253"/>
    </location>
</feature>
<feature type="strand" evidence="20">
    <location>
        <begin position="263"/>
        <end position="273"/>
    </location>
</feature>
<comment type="function">
    <molecule>Cytochrome b-c1 complex subunit Rieske, mitochondrial</molecule>
    <text evidence="1 2">Component of the ubiquinol-cytochrome c oxidoreductase, a multisubunit transmembrane complex that is part of the mitochondrial electron transport chain which drives oxidative phosphorylation. The respiratory chain contains 3 multisubunit complexes succinate dehydrogenase (complex II, CII), ubiquinol-cytochrome c oxidoreductase (cytochrome b-c1 complex, complex III, CIII) and cytochrome c oxidase (complex IV, CIV), that cooperate to transfer electrons derived from NADH and succinate to molecular oxygen, creating an electrochemical gradient over the inner membrane that drives transmembrane transport and the ATP synthase. The cytochrome b-c1 complex catalyzes electron transfer from ubiquinol to cytochrome c, linking this redox reaction to translocation of protons across the mitochondrial inner membrane, with protons being carried across the membrane as hydrogens on the quinol. In the process called Q cycle, 2 protons are consumed from the matrix, 4 protons are released into the intermembrane space and 2 electrons are passed to cytochrome c. The Rieske protein is a catalytic core subunit containing a [2Fe-2S] iron-sulfur cluster. It cycles between 2 conformational states during catalysis to transfer electrons from the quinol bound in the Q(0) site in cytochrome b to cytochrome c1 (By similarity). Incorporation of UQCRFS1 is the penultimate step in complex III assembly (By similarity).</text>
</comment>
<comment type="function">
    <molecule>Cytochrome b-c1 complex subunit 9</molecule>
    <text evidence="2 4 7 9">Component of the ubiquinol-cytochrome c oxidoreductase (cytochrome b-c1 complex, complex III, CIII). UQCRFS1 undergoes proteolytic processing once it is incorporated in the complex III dimer. One of the fragments, called subunit 9, corresponds to its mitochondrial targeting sequence (MTS) (PubMed:2996928, PubMed:8386158). The proteolytic processing is necessary for the correct insertion of UQCRFS1 in the complex III dimer, but the persistence of UQCRFS1-derived fragments may prevent newly imported UQCRFS1 to be processed and assembled into complex III and is detrimental for the complex III structure and function (By similarity).</text>
</comment>
<comment type="catalytic activity">
    <reaction evidence="1">
        <text>a quinol + 2 Fe(III)-[cytochrome c](out) = a quinone + 2 Fe(II)-[cytochrome c](out) + 2 H(+)(out)</text>
        <dbReference type="Rhea" id="RHEA:11484"/>
        <dbReference type="Rhea" id="RHEA-COMP:10350"/>
        <dbReference type="Rhea" id="RHEA-COMP:14399"/>
        <dbReference type="ChEBI" id="CHEBI:15378"/>
        <dbReference type="ChEBI" id="CHEBI:24646"/>
        <dbReference type="ChEBI" id="CHEBI:29033"/>
        <dbReference type="ChEBI" id="CHEBI:29034"/>
        <dbReference type="ChEBI" id="CHEBI:132124"/>
        <dbReference type="EC" id="7.1.1.8"/>
    </reaction>
</comment>
<comment type="cofactor">
    <cofactor evidence="11">
        <name>[2Fe-2S] cluster</name>
        <dbReference type="ChEBI" id="CHEBI:190135"/>
    </cofactor>
    <text evidence="11">Binds 1 [2Fe-2S] cluster per subunit. Fe-S cluster delivery to the Rieske protein is mediated by components of the iron sulfur (Fe-S) cluster assembly machinery that reside in the mitochondrial matrix (including HSC20 and LYRM7).</text>
</comment>
<comment type="subunit">
    <molecule>Cytochrome b-c1 complex subunit Rieske, mitochondrial</molecule>
    <text evidence="2 6 9">Component of the ubiquinol-cytochrome c oxidoreductase (cytochrome b-c1 complex, complex III, CIII), a multisubunit enzyme composed of 11 subunits. The complex is composed of 3 respiratory subunits cytochrome b, cytochrome c1 and Rieske protein UQCRFS1, 2 core protein subunits UQCRC1/QCR1 and UQCRC2/QCR2, and 6 low-molecular weight protein subunits UQCRH/QCR6, UQCRB/QCR7, UQCRQ/QCR8, UQCR10/QCR9, UQCR11/QCR10 and subunit 9, the cleavage product of Rieske protein UQCRFS1 (PubMed:8386158). The complex exists as an obligatory dimer and forms supercomplexes (SCs) in the inner mitochondrial membrane with NADH-ubiquinone oxidoreductase (complex I, CI) and cytochrome c oxidase (complex IV, CIV), resulting in different assemblies (supercomplex SCI(1)III(2)IV(1) and megacomplex MCI(2)III(2)IV(2)) (PubMed:27830641). Incorporation of the Rieske protein UQCRFS1 is the penultimate step in complex III assembly. Interacts with TTC19, which is involved in the clearance of UQCRFS1 fragments (By similarity).</text>
</comment>
<comment type="subunit">
    <molecule>Cytochrome b-c1 complex subunit 9</molecule>
    <text evidence="9 11">Component of the ubiquinol-cytochrome c oxidoreductase (cytochrome b-c1 complex, complex III, CIII) (PubMed:8386158). Subunit 9 corresponds to the mitochondrial targeting sequence (MTS) of Rieske protein UQCRFS1. It is retained after processing and incorporated inside complex III, where it remains bound to the complex and localizes between the 2 core subunits UQCRC1/QCR1 and UQCRC2/QCR2 (PubMed:9651245).</text>
</comment>
<comment type="subcellular location">
    <subcellularLocation>
        <location evidence="3">Mitochondrion inner membrane</location>
        <topology evidence="3">Single-pass membrane protein</topology>
    </subcellularLocation>
</comment>
<comment type="PTM">
    <text evidence="4">Proteolytic processing is necessary for the correct insertion of UQCRFS1 in the complex III dimer. Several fragments are generated during UQCRFS1 insertion, most probably due to the endogenous matrix-processing peptidase (MPP) activity of the 2 core protein subunits UQCRC1/QCR1 and UQCRC2/QCR2, which are homologous to the 2 mitochondrial-processing peptidase (MPP) subunits beta-MPP and alpha-MPP respectively. The action of the protease is also necessary for the clearance of the UQCRFS1 fragments.</text>
</comment>
<comment type="miscellaneous">
    <text>The Rieske protein is a high potential 2Fe-2S protein.</text>
</comment>
<comment type="similarity">
    <text evidence="13">Belongs to the Rieske iron-sulfur protein family.</text>
</comment>
<comment type="caution">
    <text evidence="2">Several peptides are generated during UQCRFS1 insertion. According to some authors, the identification of the transit peptide as the subunit 9, does not necessary imply that it must be considered as a structural subunit of the complex III dimer as additional fragments from UQCRFS1 are also present.</text>
</comment>
<comment type="sequence caution" evidence="13">
    <conflict type="frameshift">
        <sequence resource="EMBL-CDS" id="AAA30515"/>
    </conflict>
</comment>